<feature type="chain" id="PRO_1000006820" description="Phenylalanine--tRNA ligase alpha subunit">
    <location>
        <begin position="1"/>
        <end position="339"/>
    </location>
</feature>
<feature type="binding site" evidence="1">
    <location>
        <position position="254"/>
    </location>
    <ligand>
        <name>Mg(2+)</name>
        <dbReference type="ChEBI" id="CHEBI:18420"/>
        <note>shared with beta subunit</note>
    </ligand>
</feature>
<gene>
    <name evidence="1" type="primary">pheS</name>
    <name type="ordered locus">Cthe_0214</name>
</gene>
<evidence type="ECO:0000255" key="1">
    <source>
        <dbReference type="HAMAP-Rule" id="MF_00281"/>
    </source>
</evidence>
<name>SYFA_ACET2</name>
<protein>
    <recommendedName>
        <fullName evidence="1">Phenylalanine--tRNA ligase alpha subunit</fullName>
        <ecNumber evidence="1">6.1.1.20</ecNumber>
    </recommendedName>
    <alternativeName>
        <fullName evidence="1">Phenylalanyl-tRNA synthetase alpha subunit</fullName>
        <shortName evidence="1">PheRS</shortName>
    </alternativeName>
</protein>
<accession>A3DBX6</accession>
<keyword id="KW-0030">Aminoacyl-tRNA synthetase</keyword>
<keyword id="KW-0067">ATP-binding</keyword>
<keyword id="KW-0963">Cytoplasm</keyword>
<keyword id="KW-0436">Ligase</keyword>
<keyword id="KW-0460">Magnesium</keyword>
<keyword id="KW-0479">Metal-binding</keyword>
<keyword id="KW-0547">Nucleotide-binding</keyword>
<keyword id="KW-0648">Protein biosynthesis</keyword>
<keyword id="KW-1185">Reference proteome</keyword>
<organism>
    <name type="scientific">Acetivibrio thermocellus (strain ATCC 27405 / DSM 1237 / JCM 9322 / NBRC 103400 / NCIMB 10682 / NRRL B-4536 / VPI 7372)</name>
    <name type="common">Clostridium thermocellum</name>
    <dbReference type="NCBI Taxonomy" id="203119"/>
    <lineage>
        <taxon>Bacteria</taxon>
        <taxon>Bacillati</taxon>
        <taxon>Bacillota</taxon>
        <taxon>Clostridia</taxon>
        <taxon>Eubacteriales</taxon>
        <taxon>Oscillospiraceae</taxon>
        <taxon>Acetivibrio</taxon>
    </lineage>
</organism>
<dbReference type="EC" id="6.1.1.20" evidence="1"/>
<dbReference type="EMBL" id="CP000568">
    <property type="protein sequence ID" value="ABN51455.1"/>
    <property type="molecule type" value="Genomic_DNA"/>
</dbReference>
<dbReference type="RefSeq" id="WP_003512313.1">
    <property type="nucleotide sequence ID" value="NC_009012.1"/>
</dbReference>
<dbReference type="SMR" id="A3DBX6"/>
<dbReference type="STRING" id="203119.Cthe_0214"/>
<dbReference type="GeneID" id="35803508"/>
<dbReference type="KEGG" id="cth:Cthe_0214"/>
<dbReference type="eggNOG" id="COG0016">
    <property type="taxonomic scope" value="Bacteria"/>
</dbReference>
<dbReference type="HOGENOM" id="CLU_025086_0_1_9"/>
<dbReference type="OrthoDB" id="9800719at2"/>
<dbReference type="Proteomes" id="UP000002145">
    <property type="component" value="Chromosome"/>
</dbReference>
<dbReference type="GO" id="GO:0005737">
    <property type="term" value="C:cytoplasm"/>
    <property type="evidence" value="ECO:0007669"/>
    <property type="project" value="UniProtKB-SubCell"/>
</dbReference>
<dbReference type="GO" id="GO:0005524">
    <property type="term" value="F:ATP binding"/>
    <property type="evidence" value="ECO:0007669"/>
    <property type="project" value="UniProtKB-UniRule"/>
</dbReference>
<dbReference type="GO" id="GO:0140096">
    <property type="term" value="F:catalytic activity, acting on a protein"/>
    <property type="evidence" value="ECO:0007669"/>
    <property type="project" value="UniProtKB-ARBA"/>
</dbReference>
<dbReference type="GO" id="GO:0000287">
    <property type="term" value="F:magnesium ion binding"/>
    <property type="evidence" value="ECO:0007669"/>
    <property type="project" value="UniProtKB-UniRule"/>
</dbReference>
<dbReference type="GO" id="GO:0004826">
    <property type="term" value="F:phenylalanine-tRNA ligase activity"/>
    <property type="evidence" value="ECO:0007669"/>
    <property type="project" value="UniProtKB-UniRule"/>
</dbReference>
<dbReference type="GO" id="GO:0016740">
    <property type="term" value="F:transferase activity"/>
    <property type="evidence" value="ECO:0007669"/>
    <property type="project" value="UniProtKB-ARBA"/>
</dbReference>
<dbReference type="GO" id="GO:0000049">
    <property type="term" value="F:tRNA binding"/>
    <property type="evidence" value="ECO:0007669"/>
    <property type="project" value="InterPro"/>
</dbReference>
<dbReference type="GO" id="GO:0006432">
    <property type="term" value="P:phenylalanyl-tRNA aminoacylation"/>
    <property type="evidence" value="ECO:0007669"/>
    <property type="project" value="UniProtKB-UniRule"/>
</dbReference>
<dbReference type="CDD" id="cd00496">
    <property type="entry name" value="PheRS_alpha_core"/>
    <property type="match status" value="1"/>
</dbReference>
<dbReference type="FunFam" id="3.30.930.10:FF:000003">
    <property type="entry name" value="Phenylalanine--tRNA ligase alpha subunit"/>
    <property type="match status" value="1"/>
</dbReference>
<dbReference type="Gene3D" id="3.30.930.10">
    <property type="entry name" value="Bira Bifunctional Protein, Domain 2"/>
    <property type="match status" value="1"/>
</dbReference>
<dbReference type="HAMAP" id="MF_00281">
    <property type="entry name" value="Phe_tRNA_synth_alpha1"/>
    <property type="match status" value="1"/>
</dbReference>
<dbReference type="InterPro" id="IPR006195">
    <property type="entry name" value="aa-tRNA-synth_II"/>
</dbReference>
<dbReference type="InterPro" id="IPR045864">
    <property type="entry name" value="aa-tRNA-synth_II/BPL/LPL"/>
</dbReference>
<dbReference type="InterPro" id="IPR004529">
    <property type="entry name" value="Phe-tRNA-synth_IIc_asu"/>
</dbReference>
<dbReference type="InterPro" id="IPR004188">
    <property type="entry name" value="Phe-tRNA_ligase_II_N"/>
</dbReference>
<dbReference type="InterPro" id="IPR022911">
    <property type="entry name" value="Phe_tRNA_ligase_alpha1_bac"/>
</dbReference>
<dbReference type="InterPro" id="IPR002319">
    <property type="entry name" value="Phenylalanyl-tRNA_Synthase"/>
</dbReference>
<dbReference type="InterPro" id="IPR010978">
    <property type="entry name" value="tRNA-bd_arm"/>
</dbReference>
<dbReference type="NCBIfam" id="TIGR00468">
    <property type="entry name" value="pheS"/>
    <property type="match status" value="1"/>
</dbReference>
<dbReference type="PANTHER" id="PTHR11538:SF41">
    <property type="entry name" value="PHENYLALANINE--TRNA LIGASE, MITOCHONDRIAL"/>
    <property type="match status" value="1"/>
</dbReference>
<dbReference type="PANTHER" id="PTHR11538">
    <property type="entry name" value="PHENYLALANYL-TRNA SYNTHETASE"/>
    <property type="match status" value="1"/>
</dbReference>
<dbReference type="Pfam" id="PF02912">
    <property type="entry name" value="Phe_tRNA-synt_N"/>
    <property type="match status" value="1"/>
</dbReference>
<dbReference type="Pfam" id="PF01409">
    <property type="entry name" value="tRNA-synt_2d"/>
    <property type="match status" value="1"/>
</dbReference>
<dbReference type="SUPFAM" id="SSF55681">
    <property type="entry name" value="Class II aaRS and biotin synthetases"/>
    <property type="match status" value="1"/>
</dbReference>
<dbReference type="SUPFAM" id="SSF46589">
    <property type="entry name" value="tRNA-binding arm"/>
    <property type="match status" value="1"/>
</dbReference>
<dbReference type="PROSITE" id="PS50862">
    <property type="entry name" value="AA_TRNA_LIGASE_II"/>
    <property type="match status" value="1"/>
</dbReference>
<reference key="1">
    <citation type="submission" date="2007-02" db="EMBL/GenBank/DDBJ databases">
        <title>Complete sequence of Clostridium thermocellum ATCC 27405.</title>
        <authorList>
            <consortium name="US DOE Joint Genome Institute"/>
            <person name="Copeland A."/>
            <person name="Lucas S."/>
            <person name="Lapidus A."/>
            <person name="Barry K."/>
            <person name="Detter J.C."/>
            <person name="Glavina del Rio T."/>
            <person name="Hammon N."/>
            <person name="Israni S."/>
            <person name="Dalin E."/>
            <person name="Tice H."/>
            <person name="Pitluck S."/>
            <person name="Chertkov O."/>
            <person name="Brettin T."/>
            <person name="Bruce D."/>
            <person name="Han C."/>
            <person name="Tapia R."/>
            <person name="Gilna P."/>
            <person name="Schmutz J."/>
            <person name="Larimer F."/>
            <person name="Land M."/>
            <person name="Hauser L."/>
            <person name="Kyrpides N."/>
            <person name="Mikhailova N."/>
            <person name="Wu J.H.D."/>
            <person name="Newcomb M."/>
            <person name="Richardson P."/>
        </authorList>
    </citation>
    <scope>NUCLEOTIDE SEQUENCE [LARGE SCALE GENOMIC DNA]</scope>
    <source>
        <strain>ATCC 27405 / DSM 1237 / JCM 9322 / NBRC 103400 / NCIMB 10682 / NRRL B-4536 / VPI 7372</strain>
    </source>
</reference>
<sequence>MKEQLNSIRVQAEQELSNVGTIAELENIRVKYLGKKGELTAVLRGMGSLSPEERPVIGQLANEIRAYIESRIEEARNELIKKERSQKLEREVIDVTMPGKRKMLGKKHPLSIVIDEIKDVFIGMGYEIAEGPEVELDYYNFEALNIPRNHPARDVQDTFYINNNILLRTQTSPVQIRVMENKKPPIKIICPGRVYRSDAVDATHSPIFHQVEGLVVDKGVTMGDLVGTLRVFAKSLFGEKTEIRLRPHHFPFTEPSAEVDVSCWACGGTGCRICKNEGWIEILGAGMVHPKVLEVCGIDPEVYSGFAFGLGVERTAMGRFNIDDMRLLYENDIRFLKQF</sequence>
<proteinExistence type="inferred from homology"/>
<comment type="catalytic activity">
    <reaction evidence="1">
        <text>tRNA(Phe) + L-phenylalanine + ATP = L-phenylalanyl-tRNA(Phe) + AMP + diphosphate + H(+)</text>
        <dbReference type="Rhea" id="RHEA:19413"/>
        <dbReference type="Rhea" id="RHEA-COMP:9668"/>
        <dbReference type="Rhea" id="RHEA-COMP:9699"/>
        <dbReference type="ChEBI" id="CHEBI:15378"/>
        <dbReference type="ChEBI" id="CHEBI:30616"/>
        <dbReference type="ChEBI" id="CHEBI:33019"/>
        <dbReference type="ChEBI" id="CHEBI:58095"/>
        <dbReference type="ChEBI" id="CHEBI:78442"/>
        <dbReference type="ChEBI" id="CHEBI:78531"/>
        <dbReference type="ChEBI" id="CHEBI:456215"/>
        <dbReference type="EC" id="6.1.1.20"/>
    </reaction>
</comment>
<comment type="cofactor">
    <cofactor evidence="1">
        <name>Mg(2+)</name>
        <dbReference type="ChEBI" id="CHEBI:18420"/>
    </cofactor>
    <text evidence="1">Binds 2 magnesium ions per tetramer.</text>
</comment>
<comment type="subunit">
    <text evidence="1">Tetramer of two alpha and two beta subunits.</text>
</comment>
<comment type="subcellular location">
    <subcellularLocation>
        <location evidence="1">Cytoplasm</location>
    </subcellularLocation>
</comment>
<comment type="similarity">
    <text evidence="1">Belongs to the class-II aminoacyl-tRNA synthetase family. Phe-tRNA synthetase alpha subunit type 1 subfamily.</text>
</comment>